<name>RL20_PELPD</name>
<organism>
    <name type="scientific">Pelobacter propionicus (strain DSM 2379 / NBRC 103807 / OttBd1)</name>
    <dbReference type="NCBI Taxonomy" id="338966"/>
    <lineage>
        <taxon>Bacteria</taxon>
        <taxon>Pseudomonadati</taxon>
        <taxon>Thermodesulfobacteriota</taxon>
        <taxon>Desulfuromonadia</taxon>
        <taxon>Desulfuromonadales</taxon>
        <taxon>Desulfuromonadaceae</taxon>
        <taxon>Pelobacter</taxon>
    </lineage>
</organism>
<comment type="function">
    <text evidence="1">Binds directly to 23S ribosomal RNA and is necessary for the in vitro assembly process of the 50S ribosomal subunit. It is not involved in the protein synthesizing functions of that subunit.</text>
</comment>
<comment type="similarity">
    <text evidence="1">Belongs to the bacterial ribosomal protein bL20 family.</text>
</comment>
<sequence length="117" mass="13361">MARVKRGFKARRRRNKVLKLAKGYRGARSKLFRSATEAVDRALNYAFRDRRVKKRDFRSLWITRINAASRLNGLSYSKFIFGLKKANVEIDRKVLADIAVSDPKGFSEIAGVARASI</sequence>
<accession>A1ARE2</accession>
<feature type="chain" id="PRO_1000049029" description="Large ribosomal subunit protein bL20">
    <location>
        <begin position="1"/>
        <end position="117"/>
    </location>
</feature>
<keyword id="KW-1185">Reference proteome</keyword>
<keyword id="KW-0687">Ribonucleoprotein</keyword>
<keyword id="KW-0689">Ribosomal protein</keyword>
<keyword id="KW-0694">RNA-binding</keyword>
<keyword id="KW-0699">rRNA-binding</keyword>
<protein>
    <recommendedName>
        <fullName evidence="1">Large ribosomal subunit protein bL20</fullName>
    </recommendedName>
    <alternativeName>
        <fullName evidence="2">50S ribosomal protein L20</fullName>
    </alternativeName>
</protein>
<proteinExistence type="inferred from homology"/>
<evidence type="ECO:0000255" key="1">
    <source>
        <dbReference type="HAMAP-Rule" id="MF_00382"/>
    </source>
</evidence>
<evidence type="ECO:0000305" key="2"/>
<gene>
    <name evidence="1" type="primary">rplT</name>
    <name type="ordered locus">Ppro_2305</name>
</gene>
<dbReference type="EMBL" id="CP000482">
    <property type="protein sequence ID" value="ABK99912.1"/>
    <property type="molecule type" value="Genomic_DNA"/>
</dbReference>
<dbReference type="RefSeq" id="WP_011736168.1">
    <property type="nucleotide sequence ID" value="NC_008609.1"/>
</dbReference>
<dbReference type="SMR" id="A1ARE2"/>
<dbReference type="STRING" id="338966.Ppro_2305"/>
<dbReference type="KEGG" id="ppd:Ppro_2305"/>
<dbReference type="eggNOG" id="COG0292">
    <property type="taxonomic scope" value="Bacteria"/>
</dbReference>
<dbReference type="HOGENOM" id="CLU_123265_0_1_7"/>
<dbReference type="OrthoDB" id="9808966at2"/>
<dbReference type="Proteomes" id="UP000006732">
    <property type="component" value="Chromosome"/>
</dbReference>
<dbReference type="GO" id="GO:1990904">
    <property type="term" value="C:ribonucleoprotein complex"/>
    <property type="evidence" value="ECO:0007669"/>
    <property type="project" value="UniProtKB-KW"/>
</dbReference>
<dbReference type="GO" id="GO:0005840">
    <property type="term" value="C:ribosome"/>
    <property type="evidence" value="ECO:0007669"/>
    <property type="project" value="UniProtKB-KW"/>
</dbReference>
<dbReference type="GO" id="GO:0019843">
    <property type="term" value="F:rRNA binding"/>
    <property type="evidence" value="ECO:0007669"/>
    <property type="project" value="UniProtKB-UniRule"/>
</dbReference>
<dbReference type="GO" id="GO:0003735">
    <property type="term" value="F:structural constituent of ribosome"/>
    <property type="evidence" value="ECO:0007669"/>
    <property type="project" value="InterPro"/>
</dbReference>
<dbReference type="GO" id="GO:0000027">
    <property type="term" value="P:ribosomal large subunit assembly"/>
    <property type="evidence" value="ECO:0007669"/>
    <property type="project" value="UniProtKB-UniRule"/>
</dbReference>
<dbReference type="GO" id="GO:0006412">
    <property type="term" value="P:translation"/>
    <property type="evidence" value="ECO:0007669"/>
    <property type="project" value="InterPro"/>
</dbReference>
<dbReference type="CDD" id="cd07026">
    <property type="entry name" value="Ribosomal_L20"/>
    <property type="match status" value="1"/>
</dbReference>
<dbReference type="FunFam" id="1.10.1900.20:FF:000001">
    <property type="entry name" value="50S ribosomal protein L20"/>
    <property type="match status" value="1"/>
</dbReference>
<dbReference type="Gene3D" id="6.10.160.10">
    <property type="match status" value="1"/>
</dbReference>
<dbReference type="Gene3D" id="1.10.1900.20">
    <property type="entry name" value="Ribosomal protein L20"/>
    <property type="match status" value="1"/>
</dbReference>
<dbReference type="HAMAP" id="MF_00382">
    <property type="entry name" value="Ribosomal_bL20"/>
    <property type="match status" value="1"/>
</dbReference>
<dbReference type="InterPro" id="IPR005813">
    <property type="entry name" value="Ribosomal_bL20"/>
</dbReference>
<dbReference type="InterPro" id="IPR049946">
    <property type="entry name" value="RIBOSOMAL_L20_CS"/>
</dbReference>
<dbReference type="InterPro" id="IPR035566">
    <property type="entry name" value="Ribosomal_protein_bL20_C"/>
</dbReference>
<dbReference type="NCBIfam" id="TIGR01032">
    <property type="entry name" value="rplT_bact"/>
    <property type="match status" value="1"/>
</dbReference>
<dbReference type="PANTHER" id="PTHR10986">
    <property type="entry name" value="39S RIBOSOMAL PROTEIN L20"/>
    <property type="match status" value="1"/>
</dbReference>
<dbReference type="Pfam" id="PF00453">
    <property type="entry name" value="Ribosomal_L20"/>
    <property type="match status" value="1"/>
</dbReference>
<dbReference type="PRINTS" id="PR00062">
    <property type="entry name" value="RIBOSOMALL20"/>
</dbReference>
<dbReference type="SUPFAM" id="SSF74731">
    <property type="entry name" value="Ribosomal protein L20"/>
    <property type="match status" value="1"/>
</dbReference>
<dbReference type="PROSITE" id="PS00937">
    <property type="entry name" value="RIBOSOMAL_L20"/>
    <property type="match status" value="1"/>
</dbReference>
<reference key="1">
    <citation type="submission" date="2006-10" db="EMBL/GenBank/DDBJ databases">
        <title>Complete sequence of chromosome of Pelobacter propionicus DSM 2379.</title>
        <authorList>
            <consortium name="US DOE Joint Genome Institute"/>
            <person name="Copeland A."/>
            <person name="Lucas S."/>
            <person name="Lapidus A."/>
            <person name="Barry K."/>
            <person name="Detter J.C."/>
            <person name="Glavina del Rio T."/>
            <person name="Hammon N."/>
            <person name="Israni S."/>
            <person name="Dalin E."/>
            <person name="Tice H."/>
            <person name="Pitluck S."/>
            <person name="Saunders E."/>
            <person name="Brettin T."/>
            <person name="Bruce D."/>
            <person name="Han C."/>
            <person name="Tapia R."/>
            <person name="Schmutz J."/>
            <person name="Larimer F."/>
            <person name="Land M."/>
            <person name="Hauser L."/>
            <person name="Kyrpides N."/>
            <person name="Kim E."/>
            <person name="Lovley D."/>
            <person name="Richardson P."/>
        </authorList>
    </citation>
    <scope>NUCLEOTIDE SEQUENCE [LARGE SCALE GENOMIC DNA]</scope>
    <source>
        <strain>DSM 2379 / NBRC 103807 / OttBd1</strain>
    </source>
</reference>